<name>GDNF_XENLA</name>
<proteinExistence type="evidence at transcript level"/>
<reference evidence="6 7" key="1">
    <citation type="journal article" date="2007" name="Gene Expr. Patterns">
        <title>GDNF expression during Xenopus development.</title>
        <authorList>
            <person name="Kyuno J."/>
            <person name="Jones E.A."/>
        </authorList>
    </citation>
    <scope>NUCLEOTIDE SEQUENCE [MRNA]</scope>
    <scope>TISSUE SPECIFICITY</scope>
    <scope>DEVELOPMENTAL STAGE</scope>
</reference>
<dbReference type="EMBL" id="DQ779994">
    <property type="protein sequence ID" value="ABG77975.1"/>
    <property type="molecule type" value="mRNA"/>
</dbReference>
<dbReference type="RefSeq" id="NP_001090196.1">
    <property type="nucleotide sequence ID" value="NM_001096727.1"/>
</dbReference>
<dbReference type="SMR" id="Q06PM8"/>
<dbReference type="GlyCosmos" id="Q06PM8">
    <property type="glycosylation" value="2 sites, No reported glycans"/>
</dbReference>
<dbReference type="GeneID" id="779087"/>
<dbReference type="KEGG" id="xla:779087"/>
<dbReference type="AGR" id="Xenbase:XB-GENE-865016"/>
<dbReference type="CTD" id="779087"/>
<dbReference type="Xenbase" id="XB-GENE-865016">
    <property type="gene designation" value="gdnf.L"/>
</dbReference>
<dbReference type="OrthoDB" id="9950038at2759"/>
<dbReference type="Proteomes" id="UP000186698">
    <property type="component" value="Chromosome 1L"/>
</dbReference>
<dbReference type="Bgee" id="779087">
    <property type="expression patterns" value="Expressed in lung and 7 other cell types or tissues"/>
</dbReference>
<dbReference type="GO" id="GO:0005576">
    <property type="term" value="C:extracellular region"/>
    <property type="evidence" value="ECO:0000250"/>
    <property type="project" value="UniProtKB"/>
</dbReference>
<dbReference type="GO" id="GO:0005615">
    <property type="term" value="C:extracellular space"/>
    <property type="evidence" value="ECO:0000318"/>
    <property type="project" value="GO_Central"/>
</dbReference>
<dbReference type="GO" id="GO:0030116">
    <property type="term" value="F:glial cell-derived neurotrophic factor receptor binding"/>
    <property type="evidence" value="ECO:0007669"/>
    <property type="project" value="InterPro"/>
</dbReference>
<dbReference type="GO" id="GO:0008083">
    <property type="term" value="F:growth factor activity"/>
    <property type="evidence" value="ECO:0000250"/>
    <property type="project" value="UniProtKB"/>
</dbReference>
<dbReference type="GO" id="GO:0042803">
    <property type="term" value="F:protein homodimerization activity"/>
    <property type="evidence" value="ECO:0000250"/>
    <property type="project" value="UniProtKB"/>
</dbReference>
<dbReference type="GO" id="GO:0030971">
    <property type="term" value="F:receptor tyrosine kinase binding"/>
    <property type="evidence" value="ECO:0007669"/>
    <property type="project" value="InterPro"/>
</dbReference>
<dbReference type="GO" id="GO:0001658">
    <property type="term" value="P:branching involved in ureteric bud morphogenesis"/>
    <property type="evidence" value="ECO:0000250"/>
    <property type="project" value="UniProtKB"/>
</dbReference>
<dbReference type="GO" id="GO:0048484">
    <property type="term" value="P:enteric nervous system development"/>
    <property type="evidence" value="ECO:0000250"/>
    <property type="project" value="UniProtKB"/>
</dbReference>
<dbReference type="GO" id="GO:0035860">
    <property type="term" value="P:glial cell-derived neurotrophic factor receptor signaling pathway"/>
    <property type="evidence" value="ECO:0000250"/>
    <property type="project" value="UniProtKB"/>
</dbReference>
<dbReference type="GO" id="GO:0001656">
    <property type="term" value="P:metanephros development"/>
    <property type="evidence" value="ECO:0000250"/>
    <property type="project" value="UniProtKB"/>
</dbReference>
<dbReference type="GO" id="GO:0048255">
    <property type="term" value="P:mRNA stabilization"/>
    <property type="evidence" value="ECO:0000250"/>
    <property type="project" value="UniProtKB"/>
</dbReference>
<dbReference type="GO" id="GO:0043524">
    <property type="term" value="P:negative regulation of neuron apoptotic process"/>
    <property type="evidence" value="ECO:0000250"/>
    <property type="project" value="UniProtKB"/>
</dbReference>
<dbReference type="GO" id="GO:0001755">
    <property type="term" value="P:neural crest cell migration"/>
    <property type="evidence" value="ECO:0000250"/>
    <property type="project" value="UniProtKB"/>
</dbReference>
<dbReference type="GO" id="GO:0031175">
    <property type="term" value="P:neuron projection development"/>
    <property type="evidence" value="ECO:0000250"/>
    <property type="project" value="UniProtKB"/>
</dbReference>
<dbReference type="GO" id="GO:0007422">
    <property type="term" value="P:peripheral nervous system development"/>
    <property type="evidence" value="ECO:0000318"/>
    <property type="project" value="GO_Central"/>
</dbReference>
<dbReference type="GO" id="GO:0030432">
    <property type="term" value="P:peristalsis"/>
    <property type="evidence" value="ECO:0000250"/>
    <property type="project" value="UniProtKB"/>
</dbReference>
<dbReference type="GO" id="GO:0090190">
    <property type="term" value="P:positive regulation of branching involved in ureteric bud morphogenesis"/>
    <property type="evidence" value="ECO:0000250"/>
    <property type="project" value="UniProtKB"/>
</dbReference>
<dbReference type="GO" id="GO:0045944">
    <property type="term" value="P:positive regulation of transcription by RNA polymerase II"/>
    <property type="evidence" value="ECO:0000250"/>
    <property type="project" value="UniProtKB"/>
</dbReference>
<dbReference type="GO" id="GO:0072107">
    <property type="term" value="P:positive regulation of ureteric bud formation"/>
    <property type="evidence" value="ECO:0000250"/>
    <property type="project" value="UniProtKB"/>
</dbReference>
<dbReference type="GO" id="GO:0021784">
    <property type="term" value="P:postganglionic parasympathetic fiber development"/>
    <property type="evidence" value="ECO:0000250"/>
    <property type="project" value="UniProtKB"/>
</dbReference>
<dbReference type="GO" id="GO:0051584">
    <property type="term" value="P:regulation of dopamine uptake involved in synaptic transmission"/>
    <property type="evidence" value="ECO:0000250"/>
    <property type="project" value="UniProtKB"/>
</dbReference>
<dbReference type="GO" id="GO:0060688">
    <property type="term" value="P:regulation of morphogenesis of a branching structure"/>
    <property type="evidence" value="ECO:0000250"/>
    <property type="project" value="UniProtKB"/>
</dbReference>
<dbReference type="GO" id="GO:0048485">
    <property type="term" value="P:sympathetic nervous system development"/>
    <property type="evidence" value="ECO:0000250"/>
    <property type="project" value="UniProtKB"/>
</dbReference>
<dbReference type="CDD" id="cd19380">
    <property type="entry name" value="TGF_beta_GDNF"/>
    <property type="match status" value="1"/>
</dbReference>
<dbReference type="FunFam" id="2.10.90.10:FF:000015">
    <property type="entry name" value="Glial cell line-derived neurotrophic factor"/>
    <property type="match status" value="1"/>
</dbReference>
<dbReference type="Gene3D" id="2.10.90.10">
    <property type="entry name" value="Cystine-knot cytokines"/>
    <property type="match status" value="1"/>
</dbReference>
<dbReference type="InterPro" id="IPR029034">
    <property type="entry name" value="Cystine-knot_cytokine"/>
</dbReference>
<dbReference type="InterPro" id="IPR016649">
    <property type="entry name" value="GDNF"/>
</dbReference>
<dbReference type="InterPro" id="IPR043401">
    <property type="entry name" value="GDNF_fam"/>
</dbReference>
<dbReference type="InterPro" id="IPR047020">
    <property type="entry name" value="GDNF_TGF-b-like"/>
</dbReference>
<dbReference type="InterPro" id="IPR001839">
    <property type="entry name" value="TGF-b_C"/>
</dbReference>
<dbReference type="PANTHER" id="PTHR12173">
    <property type="entry name" value="GDNF SUBFAMILY OF TGF-BETA FAMILY"/>
    <property type="match status" value="1"/>
</dbReference>
<dbReference type="PANTHER" id="PTHR12173:SF1">
    <property type="entry name" value="GLIAL CELL LINE-DERIVED NEUROTROPHIC FACTOR"/>
    <property type="match status" value="1"/>
</dbReference>
<dbReference type="Pfam" id="PF00019">
    <property type="entry name" value="TGF_beta"/>
    <property type="match status" value="1"/>
</dbReference>
<dbReference type="PIRSF" id="PIRSF016238">
    <property type="entry name" value="GDNF"/>
    <property type="match status" value="1"/>
</dbReference>
<dbReference type="SMART" id="SM00204">
    <property type="entry name" value="TGFB"/>
    <property type="match status" value="1"/>
</dbReference>
<dbReference type="SUPFAM" id="SSF57501">
    <property type="entry name" value="Cystine-knot cytokines"/>
    <property type="match status" value="1"/>
</dbReference>
<dbReference type="PROSITE" id="PS51362">
    <property type="entry name" value="TGF_BETA_2"/>
    <property type="match status" value="1"/>
</dbReference>
<evidence type="ECO:0000250" key="1">
    <source>
        <dbReference type="UniProtKB" id="P39905"/>
    </source>
</evidence>
<evidence type="ECO:0000250" key="2">
    <source>
        <dbReference type="UniProtKB" id="Q07731"/>
    </source>
</evidence>
<evidence type="ECO:0000255" key="3"/>
<evidence type="ECO:0000256" key="4">
    <source>
        <dbReference type="SAM" id="MobiDB-lite"/>
    </source>
</evidence>
<evidence type="ECO:0000269" key="5">
    <source>
    </source>
</evidence>
<evidence type="ECO:0000305" key="6"/>
<evidence type="ECO:0000312" key="7">
    <source>
        <dbReference type="EMBL" id="ABG77975.1"/>
    </source>
</evidence>
<accession>Q06PM8</accession>
<protein>
    <recommendedName>
        <fullName>Glial cell line-derived neurotrophic factor</fullName>
        <shortName>xGDNF</shortName>
    </recommendedName>
</protein>
<gene>
    <name evidence="7" type="primary">gdnf</name>
</gene>
<sequence length="227" mass="25771">MKLWAILAVCILLLSSVSSIPLPSNWLAGKKRSHLPDPQEGEDQVFGMDGAVPEDPTANMAPQDQQTYTEIPDDYPDQFDDVLEFIQDTIKRLKRSSNKQPPSRRDRGRQSLAANTQISSKKTVKDRKRKNKGCVLREIHLNVTDLGLGYETKEELKFRYCSGSCNNPETTYDQILKNLTIRKKLVNDKVKQACCRPIAFDDDLSFLDDNLVYHTLKQHSAKKCGCI</sequence>
<comment type="function">
    <text evidence="1">Neurotrophic factor that enhances survival and morphological differentiation of dopaminergic neurons and increases their high-affinity dopamine uptake. Acts by binding to its coreceptor, GFRA1, leading to autophosphorylation and activation of the RET receptor.</text>
</comment>
<comment type="subunit">
    <text evidence="1">Homodimer; disulfide-linked. Interacts with GFRA1 coreceptor and RET: forms a 2:2:2 ternary complex composed of GDNF ligand, GFRA1 and RET receptor.</text>
</comment>
<comment type="subcellular location">
    <subcellularLocation>
        <location evidence="1">Secreted</location>
    </subcellularLocation>
</comment>
<comment type="tissue specificity">
    <text evidence="5">From stage 22, expressed in somites and the pronephros. At stage 24 and 26, expressed in the pharyngeal arches I-III. At stage 31, expression in the eye, central nervous system and pharyngeal arches IV and V increases. Up to stage 34, expression becomes intense at the oral cavity and lateral line structures. At this stage, expression weakens in the pharyngeal arches, and increases in the epibranchial arches. Expressed in the digestive tract in stage 34 embryos.</text>
</comment>
<comment type="developmental stage">
    <text evidence="5">First expressed at a low level at stage 12, with expression gradually increasing up to stage 22. From stage 24, expression increases sharply and continues at a similar level as development progresses through the tadpole stages.</text>
</comment>
<comment type="similarity">
    <text evidence="3">Belongs to the TGF-beta family. GDNF subfamily.</text>
</comment>
<organism>
    <name type="scientific">Xenopus laevis</name>
    <name type="common">African clawed frog</name>
    <dbReference type="NCBI Taxonomy" id="8355"/>
    <lineage>
        <taxon>Eukaryota</taxon>
        <taxon>Metazoa</taxon>
        <taxon>Chordata</taxon>
        <taxon>Craniata</taxon>
        <taxon>Vertebrata</taxon>
        <taxon>Euteleostomi</taxon>
        <taxon>Amphibia</taxon>
        <taxon>Batrachia</taxon>
        <taxon>Anura</taxon>
        <taxon>Pipoidea</taxon>
        <taxon>Pipidae</taxon>
        <taxon>Xenopodinae</taxon>
        <taxon>Xenopus</taxon>
        <taxon>Xenopus</taxon>
    </lineage>
</organism>
<feature type="signal peptide" evidence="3">
    <location>
        <begin position="1"/>
        <end position="19"/>
    </location>
</feature>
<feature type="propeptide" id="PRO_0000292934" evidence="2">
    <location>
        <begin position="20"/>
        <end position="93"/>
    </location>
</feature>
<feature type="chain" id="PRO_0000292935" description="Glial cell line-derived neurotrophic factor" evidence="3">
    <location>
        <begin position="96"/>
        <end position="227"/>
    </location>
</feature>
<feature type="region of interest" description="Disordered" evidence="4">
    <location>
        <begin position="32"/>
        <end position="61"/>
    </location>
</feature>
<feature type="region of interest" description="Disordered" evidence="4">
    <location>
        <begin position="93"/>
        <end position="113"/>
    </location>
</feature>
<feature type="glycosylation site" description="N-linked (GlcNAc...) asparagine" evidence="3">
    <location>
        <position position="142"/>
    </location>
</feature>
<feature type="glycosylation site" description="N-linked (GlcNAc...) asparagine" evidence="3">
    <location>
        <position position="178"/>
    </location>
</feature>
<feature type="disulfide bond" evidence="2">
    <location>
        <begin position="134"/>
        <end position="195"/>
    </location>
</feature>
<feature type="disulfide bond" evidence="2">
    <location>
        <begin position="161"/>
        <end position="224"/>
    </location>
</feature>
<feature type="disulfide bond" evidence="2">
    <location>
        <begin position="165"/>
        <end position="226"/>
    </location>
</feature>
<feature type="disulfide bond" description="Interchain" evidence="2">
    <location>
        <position position="194"/>
    </location>
</feature>
<keyword id="KW-0165">Cleavage on pair of basic residues</keyword>
<keyword id="KW-1015">Disulfide bond</keyword>
<keyword id="KW-0325">Glycoprotein</keyword>
<keyword id="KW-0339">Growth factor</keyword>
<keyword id="KW-1185">Reference proteome</keyword>
<keyword id="KW-0964">Secreted</keyword>
<keyword id="KW-0732">Signal</keyword>